<gene>
    <name type="primary">ypdC</name>
    <name type="ordered locus">b2382</name>
    <name type="ordered locus">JW2379</name>
</gene>
<sequence length="285" mass="32356">MKAPGLPADQQFFADLFSGLVLNPQLLGRVWFASQPASLPVGSLCIDFPRLDIVLRGEYGNLLEAKQQRLVEGEMLFIPARAANLPVNNKPVMLLSLVFAPTWLGLSFYDSRTTSLLHPARQIQLPSLQRGEGEAMLTALTHLSRSPLEQNIIQPLVLSLLHLCRSVVNMPPGNSQPRGDFLYHSICNWVQDNYAQPLTRESVAQFFNITPNHLSKLFAQHGTMRFIEYVRWVRMAKARMILQKYHLSIHEVAQRCGFPDSDYFCRVFRRQFGLTPGEYSARFQG</sequence>
<dbReference type="EMBL" id="U00096">
    <property type="protein sequence ID" value="AAC75441.1"/>
    <property type="molecule type" value="Genomic_DNA"/>
</dbReference>
<dbReference type="EMBL" id="AP009048">
    <property type="protein sequence ID" value="BAA16252.1"/>
    <property type="molecule type" value="Genomic_DNA"/>
</dbReference>
<dbReference type="PIR" id="C65012">
    <property type="entry name" value="C65012"/>
</dbReference>
<dbReference type="RefSeq" id="NP_416883.1">
    <property type="nucleotide sequence ID" value="NC_000913.3"/>
</dbReference>
<dbReference type="RefSeq" id="WP_000646835.1">
    <property type="nucleotide sequence ID" value="NZ_LN832404.1"/>
</dbReference>
<dbReference type="SMR" id="P77396"/>
<dbReference type="BioGRID" id="4263009">
    <property type="interactions" value="90"/>
</dbReference>
<dbReference type="BioGRID" id="851197">
    <property type="interactions" value="7"/>
</dbReference>
<dbReference type="FunCoup" id="P77396">
    <property type="interactions" value="16"/>
</dbReference>
<dbReference type="IntAct" id="P77396">
    <property type="interactions" value="8"/>
</dbReference>
<dbReference type="STRING" id="511145.b2382"/>
<dbReference type="PaxDb" id="511145-b2382"/>
<dbReference type="DNASU" id="946856"/>
<dbReference type="EnsemblBacteria" id="AAC75441">
    <property type="protein sequence ID" value="AAC75441"/>
    <property type="gene ID" value="b2382"/>
</dbReference>
<dbReference type="GeneID" id="946856"/>
<dbReference type="KEGG" id="ecj:JW2379"/>
<dbReference type="KEGG" id="eco:b2382"/>
<dbReference type="KEGG" id="ecoc:C3026_13245"/>
<dbReference type="PATRIC" id="fig|1411691.4.peg.4346"/>
<dbReference type="EchoBASE" id="EB3902"/>
<dbReference type="eggNOG" id="COG2207">
    <property type="taxonomic scope" value="Bacteria"/>
</dbReference>
<dbReference type="HOGENOM" id="CLU_000445_81_2_6"/>
<dbReference type="InParanoid" id="P77396"/>
<dbReference type="OMA" id="IPPNCWN"/>
<dbReference type="OrthoDB" id="1050625at2"/>
<dbReference type="PhylomeDB" id="P77396"/>
<dbReference type="BioCyc" id="EcoCyc:G7245-MONOMER"/>
<dbReference type="PRO" id="PR:P77396"/>
<dbReference type="Proteomes" id="UP000000625">
    <property type="component" value="Chromosome"/>
</dbReference>
<dbReference type="GO" id="GO:0003700">
    <property type="term" value="F:DNA-binding transcription factor activity"/>
    <property type="evidence" value="ECO:0007669"/>
    <property type="project" value="InterPro"/>
</dbReference>
<dbReference type="GO" id="GO:0043565">
    <property type="term" value="F:sequence-specific DNA binding"/>
    <property type="evidence" value="ECO:0007669"/>
    <property type="project" value="InterPro"/>
</dbReference>
<dbReference type="Gene3D" id="1.10.10.60">
    <property type="entry name" value="Homeodomain-like"/>
    <property type="match status" value="2"/>
</dbReference>
<dbReference type="InterPro" id="IPR009057">
    <property type="entry name" value="Homeodomain-like_sf"/>
</dbReference>
<dbReference type="InterPro" id="IPR018060">
    <property type="entry name" value="HTH_AraC"/>
</dbReference>
<dbReference type="InterPro" id="IPR018062">
    <property type="entry name" value="HTH_AraC-typ_CS"/>
</dbReference>
<dbReference type="InterPro" id="IPR020449">
    <property type="entry name" value="Tscrpt_reg_AraC-type_HTH"/>
</dbReference>
<dbReference type="PANTHER" id="PTHR43280">
    <property type="entry name" value="ARAC-FAMILY TRANSCRIPTIONAL REGULATOR"/>
    <property type="match status" value="1"/>
</dbReference>
<dbReference type="PANTHER" id="PTHR43280:SF10">
    <property type="entry name" value="REGULATORY PROTEIN POCR"/>
    <property type="match status" value="1"/>
</dbReference>
<dbReference type="Pfam" id="PF12833">
    <property type="entry name" value="HTH_18"/>
    <property type="match status" value="1"/>
</dbReference>
<dbReference type="PRINTS" id="PR00032">
    <property type="entry name" value="HTHARAC"/>
</dbReference>
<dbReference type="SMART" id="SM00342">
    <property type="entry name" value="HTH_ARAC"/>
    <property type="match status" value="1"/>
</dbReference>
<dbReference type="SUPFAM" id="SSF46689">
    <property type="entry name" value="Homeodomain-like"/>
    <property type="match status" value="2"/>
</dbReference>
<dbReference type="PROSITE" id="PS00041">
    <property type="entry name" value="HTH_ARAC_FAMILY_1"/>
    <property type="match status" value="1"/>
</dbReference>
<dbReference type="PROSITE" id="PS01124">
    <property type="entry name" value="HTH_ARAC_FAMILY_2"/>
    <property type="match status" value="1"/>
</dbReference>
<evidence type="ECO:0000255" key="1">
    <source>
        <dbReference type="PROSITE-ProRule" id="PRU00593"/>
    </source>
</evidence>
<reference key="1">
    <citation type="journal article" date="1997" name="DNA Res.">
        <title>Construction of a contiguous 874-kb sequence of the Escherichia coli-K12 genome corresponding to 50.0-68.8 min on the linkage map and analysis of its sequence features.</title>
        <authorList>
            <person name="Yamamoto Y."/>
            <person name="Aiba H."/>
            <person name="Baba T."/>
            <person name="Hayashi K."/>
            <person name="Inada T."/>
            <person name="Isono K."/>
            <person name="Itoh T."/>
            <person name="Kimura S."/>
            <person name="Kitagawa M."/>
            <person name="Makino K."/>
            <person name="Miki T."/>
            <person name="Mitsuhashi N."/>
            <person name="Mizobuchi K."/>
            <person name="Mori H."/>
            <person name="Nakade S."/>
            <person name="Nakamura Y."/>
            <person name="Nashimoto H."/>
            <person name="Oshima T."/>
            <person name="Oyama S."/>
            <person name="Saito N."/>
            <person name="Sampei G."/>
            <person name="Satoh Y."/>
            <person name="Sivasundaram S."/>
            <person name="Tagami H."/>
            <person name="Takahashi H."/>
            <person name="Takeda J."/>
            <person name="Takemoto K."/>
            <person name="Uehara K."/>
            <person name="Wada C."/>
            <person name="Yamagata S."/>
            <person name="Horiuchi T."/>
        </authorList>
    </citation>
    <scope>NUCLEOTIDE SEQUENCE [LARGE SCALE GENOMIC DNA]</scope>
    <source>
        <strain>K12 / W3110 / ATCC 27325 / DSM 5911</strain>
    </source>
</reference>
<reference key="2">
    <citation type="journal article" date="1997" name="Science">
        <title>The complete genome sequence of Escherichia coli K-12.</title>
        <authorList>
            <person name="Blattner F.R."/>
            <person name="Plunkett G. III"/>
            <person name="Bloch C.A."/>
            <person name="Perna N.T."/>
            <person name="Burland V."/>
            <person name="Riley M."/>
            <person name="Collado-Vides J."/>
            <person name="Glasner J.D."/>
            <person name="Rode C.K."/>
            <person name="Mayhew G.F."/>
            <person name="Gregor J."/>
            <person name="Davis N.W."/>
            <person name="Kirkpatrick H.A."/>
            <person name="Goeden M.A."/>
            <person name="Rose D.J."/>
            <person name="Mau B."/>
            <person name="Shao Y."/>
        </authorList>
    </citation>
    <scope>NUCLEOTIDE SEQUENCE [LARGE SCALE GENOMIC DNA]</scope>
    <source>
        <strain>K12 / MG1655 / ATCC 47076</strain>
    </source>
</reference>
<reference key="3">
    <citation type="journal article" date="2006" name="Mol. Syst. Biol.">
        <title>Highly accurate genome sequences of Escherichia coli K-12 strains MG1655 and W3110.</title>
        <authorList>
            <person name="Hayashi K."/>
            <person name="Morooka N."/>
            <person name="Yamamoto Y."/>
            <person name="Fujita K."/>
            <person name="Isono K."/>
            <person name="Choi S."/>
            <person name="Ohtsubo E."/>
            <person name="Baba T."/>
            <person name="Wanner B.L."/>
            <person name="Mori H."/>
            <person name="Horiuchi T."/>
        </authorList>
    </citation>
    <scope>NUCLEOTIDE SEQUENCE [LARGE SCALE GENOMIC DNA]</scope>
    <source>
        <strain>K12 / W3110 / ATCC 27325 / DSM 5911</strain>
    </source>
</reference>
<feature type="chain" id="PRO_0000194617" description="Uncharacterized HTH-type transcriptional regulator YpdC">
    <location>
        <begin position="1"/>
        <end position="285"/>
    </location>
</feature>
<feature type="domain" description="HTH araC/xylS-type" evidence="1">
    <location>
        <begin position="184"/>
        <end position="282"/>
    </location>
</feature>
<feature type="DNA-binding region" description="H-T-H motif" evidence="1">
    <location>
        <begin position="201"/>
        <end position="222"/>
    </location>
</feature>
<feature type="DNA-binding region" description="H-T-H motif" evidence="1">
    <location>
        <begin position="249"/>
        <end position="272"/>
    </location>
</feature>
<accession>P77396</accession>
<organism>
    <name type="scientific">Escherichia coli (strain K12)</name>
    <dbReference type="NCBI Taxonomy" id="83333"/>
    <lineage>
        <taxon>Bacteria</taxon>
        <taxon>Pseudomonadati</taxon>
        <taxon>Pseudomonadota</taxon>
        <taxon>Gammaproteobacteria</taxon>
        <taxon>Enterobacterales</taxon>
        <taxon>Enterobacteriaceae</taxon>
        <taxon>Escherichia</taxon>
    </lineage>
</organism>
<name>YPDC_ECOLI</name>
<protein>
    <recommendedName>
        <fullName>Uncharacterized HTH-type transcriptional regulator YpdC</fullName>
    </recommendedName>
</protein>
<keyword id="KW-0238">DNA-binding</keyword>
<keyword id="KW-1185">Reference proteome</keyword>
<keyword id="KW-0804">Transcription</keyword>
<keyword id="KW-0805">Transcription regulation</keyword>
<proteinExistence type="predicted"/>